<feature type="chain" id="PRO_0000155286" description="Thymidylate kinase">
    <location>
        <begin position="1"/>
        <end position="216"/>
    </location>
</feature>
<feature type="binding site" evidence="1">
    <location>
        <begin position="10"/>
        <end position="17"/>
    </location>
    <ligand>
        <name>ATP</name>
        <dbReference type="ChEBI" id="CHEBI:30616"/>
    </ligand>
</feature>
<accession>Q5FM02</accession>
<reference key="1">
    <citation type="journal article" date="2005" name="Proc. Natl. Acad. Sci. U.S.A.">
        <title>Complete genome sequence of the probiotic lactic acid bacterium Lactobacillus acidophilus NCFM.</title>
        <authorList>
            <person name="Altermann E."/>
            <person name="Russell W.M."/>
            <person name="Azcarate-Peril M.A."/>
            <person name="Barrangou R."/>
            <person name="Buck B.L."/>
            <person name="McAuliffe O."/>
            <person name="Souther N."/>
            <person name="Dobson A."/>
            <person name="Duong T."/>
            <person name="Callanan M."/>
            <person name="Lick S."/>
            <person name="Hamrick A."/>
            <person name="Cano R."/>
            <person name="Klaenhammer T.R."/>
        </authorList>
    </citation>
    <scope>NUCLEOTIDE SEQUENCE [LARGE SCALE GENOMIC DNA]</scope>
    <source>
        <strain>ATCC 700396 / NCK56 / N2 / NCFM</strain>
    </source>
</reference>
<sequence>MKGYFVSFEGPDGAGKSTVLKEVLAEIAPQLKTQYLVTREPGGSKIAEKIRDIILDPANDKMDPKTEALLYAAARSQHVEEIIKPAINEGKVVFSDRFVDSSLAYQGQGRDLGIAKVKQINDFATDKLDPDLTFFLDIAPEIGLSRIKKLRPAQEDRLEQEDIAFHQKVYEGFLKVIKMYPDRFVVINATQPIDQVVKQVVTELKQRLPKTILENN</sequence>
<gene>
    <name evidence="1" type="primary">tmk</name>
    <name type="ordered locus">LBA0381</name>
</gene>
<proteinExistence type="inferred from homology"/>
<dbReference type="EC" id="2.7.4.9" evidence="1"/>
<dbReference type="EMBL" id="CP000033">
    <property type="protein sequence ID" value="AAV42272.1"/>
    <property type="molecule type" value="Genomic_DNA"/>
</dbReference>
<dbReference type="RefSeq" id="WP_011254134.1">
    <property type="nucleotide sequence ID" value="NC_006814.3"/>
</dbReference>
<dbReference type="RefSeq" id="YP_193303.1">
    <property type="nucleotide sequence ID" value="NC_006814.3"/>
</dbReference>
<dbReference type="SMR" id="Q5FM02"/>
<dbReference type="STRING" id="272621.LBA0381"/>
<dbReference type="GeneID" id="93290519"/>
<dbReference type="KEGG" id="lac:LBA0381"/>
<dbReference type="PATRIC" id="fig|272621.13.peg.367"/>
<dbReference type="eggNOG" id="COG0125">
    <property type="taxonomic scope" value="Bacteria"/>
</dbReference>
<dbReference type="HOGENOM" id="CLU_049131_0_2_9"/>
<dbReference type="OrthoDB" id="9774907at2"/>
<dbReference type="BioCyc" id="LACI272621:G1G49-375-MONOMER"/>
<dbReference type="Proteomes" id="UP000006381">
    <property type="component" value="Chromosome"/>
</dbReference>
<dbReference type="GO" id="GO:0005829">
    <property type="term" value="C:cytosol"/>
    <property type="evidence" value="ECO:0007669"/>
    <property type="project" value="TreeGrafter"/>
</dbReference>
<dbReference type="GO" id="GO:0005524">
    <property type="term" value="F:ATP binding"/>
    <property type="evidence" value="ECO:0007669"/>
    <property type="project" value="UniProtKB-UniRule"/>
</dbReference>
<dbReference type="GO" id="GO:0004798">
    <property type="term" value="F:dTMP kinase activity"/>
    <property type="evidence" value="ECO:0007669"/>
    <property type="project" value="UniProtKB-UniRule"/>
</dbReference>
<dbReference type="GO" id="GO:0006233">
    <property type="term" value="P:dTDP biosynthetic process"/>
    <property type="evidence" value="ECO:0007669"/>
    <property type="project" value="InterPro"/>
</dbReference>
<dbReference type="GO" id="GO:0006235">
    <property type="term" value="P:dTTP biosynthetic process"/>
    <property type="evidence" value="ECO:0007669"/>
    <property type="project" value="UniProtKB-UniRule"/>
</dbReference>
<dbReference type="GO" id="GO:0006227">
    <property type="term" value="P:dUDP biosynthetic process"/>
    <property type="evidence" value="ECO:0007669"/>
    <property type="project" value="TreeGrafter"/>
</dbReference>
<dbReference type="CDD" id="cd01672">
    <property type="entry name" value="TMPK"/>
    <property type="match status" value="1"/>
</dbReference>
<dbReference type="FunFam" id="3.40.50.300:FF:000225">
    <property type="entry name" value="Thymidylate kinase"/>
    <property type="match status" value="1"/>
</dbReference>
<dbReference type="Gene3D" id="3.40.50.300">
    <property type="entry name" value="P-loop containing nucleotide triphosphate hydrolases"/>
    <property type="match status" value="1"/>
</dbReference>
<dbReference type="HAMAP" id="MF_00165">
    <property type="entry name" value="Thymidylate_kinase"/>
    <property type="match status" value="1"/>
</dbReference>
<dbReference type="InterPro" id="IPR027417">
    <property type="entry name" value="P-loop_NTPase"/>
</dbReference>
<dbReference type="InterPro" id="IPR039430">
    <property type="entry name" value="Thymidylate_kin-like_dom"/>
</dbReference>
<dbReference type="InterPro" id="IPR018094">
    <property type="entry name" value="Thymidylate_kinase"/>
</dbReference>
<dbReference type="NCBIfam" id="TIGR00041">
    <property type="entry name" value="DTMP_kinase"/>
    <property type="match status" value="1"/>
</dbReference>
<dbReference type="PANTHER" id="PTHR10344">
    <property type="entry name" value="THYMIDYLATE KINASE"/>
    <property type="match status" value="1"/>
</dbReference>
<dbReference type="PANTHER" id="PTHR10344:SF4">
    <property type="entry name" value="UMP-CMP KINASE 2, MITOCHONDRIAL"/>
    <property type="match status" value="1"/>
</dbReference>
<dbReference type="Pfam" id="PF02223">
    <property type="entry name" value="Thymidylate_kin"/>
    <property type="match status" value="1"/>
</dbReference>
<dbReference type="SUPFAM" id="SSF52540">
    <property type="entry name" value="P-loop containing nucleoside triphosphate hydrolases"/>
    <property type="match status" value="1"/>
</dbReference>
<protein>
    <recommendedName>
        <fullName evidence="1">Thymidylate kinase</fullName>
        <ecNumber evidence="1">2.7.4.9</ecNumber>
    </recommendedName>
    <alternativeName>
        <fullName evidence="1">dTMP kinase</fullName>
    </alternativeName>
</protein>
<name>KTHY_LACAC</name>
<comment type="function">
    <text evidence="1">Phosphorylation of dTMP to form dTDP in both de novo and salvage pathways of dTTP synthesis.</text>
</comment>
<comment type="catalytic activity">
    <reaction evidence="1">
        <text>dTMP + ATP = dTDP + ADP</text>
        <dbReference type="Rhea" id="RHEA:13517"/>
        <dbReference type="ChEBI" id="CHEBI:30616"/>
        <dbReference type="ChEBI" id="CHEBI:58369"/>
        <dbReference type="ChEBI" id="CHEBI:63528"/>
        <dbReference type="ChEBI" id="CHEBI:456216"/>
        <dbReference type="EC" id="2.7.4.9"/>
    </reaction>
</comment>
<comment type="similarity">
    <text evidence="1">Belongs to the thymidylate kinase family.</text>
</comment>
<keyword id="KW-0067">ATP-binding</keyword>
<keyword id="KW-0418">Kinase</keyword>
<keyword id="KW-0545">Nucleotide biosynthesis</keyword>
<keyword id="KW-0547">Nucleotide-binding</keyword>
<keyword id="KW-1185">Reference proteome</keyword>
<keyword id="KW-0808">Transferase</keyword>
<organism>
    <name type="scientific">Lactobacillus acidophilus (strain ATCC 700396 / NCK56 / N2 / NCFM)</name>
    <dbReference type="NCBI Taxonomy" id="272621"/>
    <lineage>
        <taxon>Bacteria</taxon>
        <taxon>Bacillati</taxon>
        <taxon>Bacillota</taxon>
        <taxon>Bacilli</taxon>
        <taxon>Lactobacillales</taxon>
        <taxon>Lactobacillaceae</taxon>
        <taxon>Lactobacillus</taxon>
    </lineage>
</organism>
<evidence type="ECO:0000255" key="1">
    <source>
        <dbReference type="HAMAP-Rule" id="MF_00165"/>
    </source>
</evidence>